<feature type="chain" id="PRO_1000090870" description="Cysteine--tRNA ligase">
    <location>
        <begin position="1"/>
        <end position="461"/>
    </location>
</feature>
<feature type="short sequence motif" description="'HIGH' region">
    <location>
        <begin position="30"/>
        <end position="40"/>
    </location>
</feature>
<feature type="short sequence motif" description="'KMSKS' region">
    <location>
        <begin position="266"/>
        <end position="270"/>
    </location>
</feature>
<feature type="binding site" evidence="1">
    <location>
        <position position="28"/>
    </location>
    <ligand>
        <name>Zn(2+)</name>
        <dbReference type="ChEBI" id="CHEBI:29105"/>
    </ligand>
</feature>
<feature type="binding site" evidence="1">
    <location>
        <position position="209"/>
    </location>
    <ligand>
        <name>Zn(2+)</name>
        <dbReference type="ChEBI" id="CHEBI:29105"/>
    </ligand>
</feature>
<feature type="binding site" evidence="1">
    <location>
        <position position="234"/>
    </location>
    <ligand>
        <name>Zn(2+)</name>
        <dbReference type="ChEBI" id="CHEBI:29105"/>
    </ligand>
</feature>
<feature type="binding site" evidence="1">
    <location>
        <position position="238"/>
    </location>
    <ligand>
        <name>Zn(2+)</name>
        <dbReference type="ChEBI" id="CHEBI:29105"/>
    </ligand>
</feature>
<feature type="binding site" evidence="1">
    <location>
        <position position="269"/>
    </location>
    <ligand>
        <name>ATP</name>
        <dbReference type="ChEBI" id="CHEBI:30616"/>
    </ligand>
</feature>
<accession>B4SXP2</accession>
<proteinExistence type="inferred from homology"/>
<comment type="catalytic activity">
    <reaction evidence="1">
        <text>tRNA(Cys) + L-cysteine + ATP = L-cysteinyl-tRNA(Cys) + AMP + diphosphate</text>
        <dbReference type="Rhea" id="RHEA:17773"/>
        <dbReference type="Rhea" id="RHEA-COMP:9661"/>
        <dbReference type="Rhea" id="RHEA-COMP:9679"/>
        <dbReference type="ChEBI" id="CHEBI:30616"/>
        <dbReference type="ChEBI" id="CHEBI:33019"/>
        <dbReference type="ChEBI" id="CHEBI:35235"/>
        <dbReference type="ChEBI" id="CHEBI:78442"/>
        <dbReference type="ChEBI" id="CHEBI:78517"/>
        <dbReference type="ChEBI" id="CHEBI:456215"/>
        <dbReference type="EC" id="6.1.1.16"/>
    </reaction>
</comment>
<comment type="cofactor">
    <cofactor evidence="1">
        <name>Zn(2+)</name>
        <dbReference type="ChEBI" id="CHEBI:29105"/>
    </cofactor>
    <text evidence="1">Binds 1 zinc ion per subunit.</text>
</comment>
<comment type="subunit">
    <text evidence="1">Monomer.</text>
</comment>
<comment type="subcellular location">
    <subcellularLocation>
        <location evidence="1">Cytoplasm</location>
    </subcellularLocation>
</comment>
<comment type="similarity">
    <text evidence="1">Belongs to the class-I aminoacyl-tRNA synthetase family.</text>
</comment>
<keyword id="KW-0030">Aminoacyl-tRNA synthetase</keyword>
<keyword id="KW-0067">ATP-binding</keyword>
<keyword id="KW-0963">Cytoplasm</keyword>
<keyword id="KW-0436">Ligase</keyword>
<keyword id="KW-0479">Metal-binding</keyword>
<keyword id="KW-0547">Nucleotide-binding</keyword>
<keyword id="KW-0648">Protein biosynthesis</keyword>
<keyword id="KW-0862">Zinc</keyword>
<dbReference type="EC" id="6.1.1.16" evidence="1"/>
<dbReference type="EMBL" id="CP001113">
    <property type="protein sequence ID" value="ACF61704.1"/>
    <property type="molecule type" value="Genomic_DNA"/>
</dbReference>
<dbReference type="RefSeq" id="WP_000912377.1">
    <property type="nucleotide sequence ID" value="NZ_CCMR01000003.1"/>
</dbReference>
<dbReference type="SMR" id="B4SXP2"/>
<dbReference type="KEGG" id="see:SNSL254_A0590"/>
<dbReference type="HOGENOM" id="CLU_013528_0_1_6"/>
<dbReference type="Proteomes" id="UP000008824">
    <property type="component" value="Chromosome"/>
</dbReference>
<dbReference type="GO" id="GO:0005829">
    <property type="term" value="C:cytosol"/>
    <property type="evidence" value="ECO:0007669"/>
    <property type="project" value="TreeGrafter"/>
</dbReference>
<dbReference type="GO" id="GO:0005524">
    <property type="term" value="F:ATP binding"/>
    <property type="evidence" value="ECO:0007669"/>
    <property type="project" value="UniProtKB-UniRule"/>
</dbReference>
<dbReference type="GO" id="GO:0004817">
    <property type="term" value="F:cysteine-tRNA ligase activity"/>
    <property type="evidence" value="ECO:0007669"/>
    <property type="project" value="UniProtKB-UniRule"/>
</dbReference>
<dbReference type="GO" id="GO:0008270">
    <property type="term" value="F:zinc ion binding"/>
    <property type="evidence" value="ECO:0007669"/>
    <property type="project" value="UniProtKB-UniRule"/>
</dbReference>
<dbReference type="GO" id="GO:0006423">
    <property type="term" value="P:cysteinyl-tRNA aminoacylation"/>
    <property type="evidence" value="ECO:0007669"/>
    <property type="project" value="UniProtKB-UniRule"/>
</dbReference>
<dbReference type="CDD" id="cd07963">
    <property type="entry name" value="Anticodon_Ia_Cys"/>
    <property type="match status" value="1"/>
</dbReference>
<dbReference type="CDD" id="cd00672">
    <property type="entry name" value="CysRS_core"/>
    <property type="match status" value="1"/>
</dbReference>
<dbReference type="FunFam" id="1.20.120.1910:FF:000001">
    <property type="entry name" value="Cysteine--tRNA ligase"/>
    <property type="match status" value="1"/>
</dbReference>
<dbReference type="FunFam" id="3.40.50.620:FF:000009">
    <property type="entry name" value="Cysteine--tRNA ligase"/>
    <property type="match status" value="1"/>
</dbReference>
<dbReference type="Gene3D" id="1.20.120.1910">
    <property type="entry name" value="Cysteine-tRNA ligase, C-terminal anti-codon recognition domain"/>
    <property type="match status" value="1"/>
</dbReference>
<dbReference type="Gene3D" id="3.40.50.620">
    <property type="entry name" value="HUPs"/>
    <property type="match status" value="1"/>
</dbReference>
<dbReference type="HAMAP" id="MF_00041">
    <property type="entry name" value="Cys_tRNA_synth"/>
    <property type="match status" value="1"/>
</dbReference>
<dbReference type="InterPro" id="IPR015803">
    <property type="entry name" value="Cys-tRNA-ligase"/>
</dbReference>
<dbReference type="InterPro" id="IPR015273">
    <property type="entry name" value="Cys-tRNA-synt_Ia_DALR"/>
</dbReference>
<dbReference type="InterPro" id="IPR024909">
    <property type="entry name" value="Cys-tRNA/MSH_ligase"/>
</dbReference>
<dbReference type="InterPro" id="IPR056411">
    <property type="entry name" value="CysS_C"/>
</dbReference>
<dbReference type="InterPro" id="IPR014729">
    <property type="entry name" value="Rossmann-like_a/b/a_fold"/>
</dbReference>
<dbReference type="InterPro" id="IPR032678">
    <property type="entry name" value="tRNA-synt_1_cat_dom"/>
</dbReference>
<dbReference type="InterPro" id="IPR009080">
    <property type="entry name" value="tRNAsynth_Ia_anticodon-bd"/>
</dbReference>
<dbReference type="NCBIfam" id="TIGR00435">
    <property type="entry name" value="cysS"/>
    <property type="match status" value="1"/>
</dbReference>
<dbReference type="PANTHER" id="PTHR10890:SF3">
    <property type="entry name" value="CYSTEINE--TRNA LIGASE, CYTOPLASMIC"/>
    <property type="match status" value="1"/>
</dbReference>
<dbReference type="PANTHER" id="PTHR10890">
    <property type="entry name" value="CYSTEINYL-TRNA SYNTHETASE"/>
    <property type="match status" value="1"/>
</dbReference>
<dbReference type="Pfam" id="PF23493">
    <property type="entry name" value="CysS_C"/>
    <property type="match status" value="1"/>
</dbReference>
<dbReference type="Pfam" id="PF09190">
    <property type="entry name" value="DALR_2"/>
    <property type="match status" value="1"/>
</dbReference>
<dbReference type="Pfam" id="PF01406">
    <property type="entry name" value="tRNA-synt_1e"/>
    <property type="match status" value="1"/>
</dbReference>
<dbReference type="PRINTS" id="PR00983">
    <property type="entry name" value="TRNASYNTHCYS"/>
</dbReference>
<dbReference type="SMART" id="SM00840">
    <property type="entry name" value="DALR_2"/>
    <property type="match status" value="1"/>
</dbReference>
<dbReference type="SUPFAM" id="SSF47323">
    <property type="entry name" value="Anticodon-binding domain of a subclass of class I aminoacyl-tRNA synthetases"/>
    <property type="match status" value="1"/>
</dbReference>
<dbReference type="SUPFAM" id="SSF52374">
    <property type="entry name" value="Nucleotidylyl transferase"/>
    <property type="match status" value="1"/>
</dbReference>
<sequence length="461" mass="52287">MLKIFNTLTRQKEEFKPIHAGEVGMYVCGITVYDLCHIGHGRTFVAFDVVARYLRFLGYKLKYVRNITDIDDKIIKRANENGESFVALVDRMIAEMHQDFDALNILRPDSEPRATHHIQEIIELTRTLIEKGHAYVADNGDVMFDVPTDPTYGQLSRQDLEQLQAGARVDVVDVKRNPMDFVLWKMSKEGEPSWPSPWGEGRPGWHIECSAMNCKQLGNHFDIHGGGSDLMFPHHENEIAQSTCAHDGEYVNYWMHSGMVMVDREKMSKSLGNFFTVRDVLKYYDAETVRYFLMSGHYRSQLNYSEENLKQARASLERLYTALRGTDKSAAPAGGEAFEARFVEAMNDDFNTPEAYSVLFDMAREVNRLKGEDMTAANAMASHLRKISGVLGLLEQEPDVFLQSGAQADDGEVAEIEALIQQRLDARKAKDWAAADAARDRLTEMGIILEDGPQGTTWRRK</sequence>
<organism>
    <name type="scientific">Salmonella newport (strain SL254)</name>
    <dbReference type="NCBI Taxonomy" id="423368"/>
    <lineage>
        <taxon>Bacteria</taxon>
        <taxon>Pseudomonadati</taxon>
        <taxon>Pseudomonadota</taxon>
        <taxon>Gammaproteobacteria</taxon>
        <taxon>Enterobacterales</taxon>
        <taxon>Enterobacteriaceae</taxon>
        <taxon>Salmonella</taxon>
    </lineage>
</organism>
<name>SYC_SALNS</name>
<evidence type="ECO:0000255" key="1">
    <source>
        <dbReference type="HAMAP-Rule" id="MF_00041"/>
    </source>
</evidence>
<reference key="1">
    <citation type="journal article" date="2011" name="J. Bacteriol.">
        <title>Comparative genomics of 28 Salmonella enterica isolates: evidence for CRISPR-mediated adaptive sublineage evolution.</title>
        <authorList>
            <person name="Fricke W.F."/>
            <person name="Mammel M.K."/>
            <person name="McDermott P.F."/>
            <person name="Tartera C."/>
            <person name="White D.G."/>
            <person name="Leclerc J.E."/>
            <person name="Ravel J."/>
            <person name="Cebula T.A."/>
        </authorList>
    </citation>
    <scope>NUCLEOTIDE SEQUENCE [LARGE SCALE GENOMIC DNA]</scope>
    <source>
        <strain>SL254</strain>
    </source>
</reference>
<protein>
    <recommendedName>
        <fullName evidence="1">Cysteine--tRNA ligase</fullName>
        <ecNumber evidence="1">6.1.1.16</ecNumber>
    </recommendedName>
    <alternativeName>
        <fullName evidence="1">Cysteinyl-tRNA synthetase</fullName>
        <shortName evidence="1">CysRS</shortName>
    </alternativeName>
</protein>
<gene>
    <name evidence="1" type="primary">cysS</name>
    <name type="ordered locus">SNSL254_A0590</name>
</gene>